<keyword id="KW-0002">3D-structure</keyword>
<keyword id="KW-0954">Congenital adrenal hyperplasia</keyword>
<keyword id="KW-0225">Disease variant</keyword>
<keyword id="KW-0256">Endoplasmic reticulum</keyword>
<keyword id="KW-0349">Heme</keyword>
<keyword id="KW-0408">Iron</keyword>
<keyword id="KW-0443">Lipid metabolism</keyword>
<keyword id="KW-0456">Lyase</keyword>
<keyword id="KW-0472">Membrane</keyword>
<keyword id="KW-0479">Metal-binding</keyword>
<keyword id="KW-0492">Microsome</keyword>
<keyword id="KW-0503">Monooxygenase</keyword>
<keyword id="KW-0560">Oxidoreductase</keyword>
<keyword id="KW-0597">Phosphoprotein</keyword>
<keyword id="KW-1267">Proteomics identification</keyword>
<keyword id="KW-1185">Reference proteome</keyword>
<keyword id="KW-0755">Steroidogenesis</keyword>
<dbReference type="EC" id="1.14.14.19" evidence="10 13 15"/>
<dbReference type="EC" id="1.14.14.32" evidence="10 13 15"/>
<dbReference type="EMBL" id="M14564">
    <property type="protein sequence ID" value="AAA52151.1"/>
    <property type="molecule type" value="mRNA"/>
</dbReference>
<dbReference type="EMBL" id="M19489">
    <property type="protein sequence ID" value="AAA36405.1"/>
    <property type="molecule type" value="Genomic_DNA"/>
</dbReference>
<dbReference type="EMBL" id="M63871">
    <property type="protein sequence ID" value="AAA59984.1"/>
    <property type="molecule type" value="Genomic_DNA"/>
</dbReference>
<dbReference type="EMBL" id="M31153">
    <property type="protein sequence ID" value="AAA52140.1"/>
    <property type="status" value="ALT_SEQ"/>
    <property type="molecule type" value="Genomic_DNA"/>
</dbReference>
<dbReference type="EMBL" id="M31146">
    <property type="protein sequence ID" value="AAA52140.1"/>
    <property type="status" value="JOINED"/>
    <property type="molecule type" value="Genomic_DNA"/>
</dbReference>
<dbReference type="EMBL" id="M31147">
    <property type="protein sequence ID" value="AAA52140.1"/>
    <property type="status" value="JOINED"/>
    <property type="molecule type" value="Genomic_DNA"/>
</dbReference>
<dbReference type="EMBL" id="M31148">
    <property type="protein sequence ID" value="AAA52140.1"/>
    <property type="status" value="JOINED"/>
    <property type="molecule type" value="Genomic_DNA"/>
</dbReference>
<dbReference type="EMBL" id="M31149">
    <property type="protein sequence ID" value="AAA52140.1"/>
    <property type="status" value="JOINED"/>
    <property type="molecule type" value="Genomic_DNA"/>
</dbReference>
<dbReference type="EMBL" id="M31150">
    <property type="protein sequence ID" value="AAA52140.1"/>
    <property type="status" value="JOINED"/>
    <property type="molecule type" value="Genomic_DNA"/>
</dbReference>
<dbReference type="EMBL" id="M31151">
    <property type="protein sequence ID" value="AAA52140.1"/>
    <property type="status" value="JOINED"/>
    <property type="molecule type" value="Genomic_DNA"/>
</dbReference>
<dbReference type="EMBL" id="M31152">
    <property type="protein sequence ID" value="AAA52140.1"/>
    <property type="status" value="JOINED"/>
    <property type="molecule type" value="Genomic_DNA"/>
</dbReference>
<dbReference type="EMBL" id="BT020000">
    <property type="protein sequence ID" value="AAV38803.1"/>
    <property type="molecule type" value="mRNA"/>
</dbReference>
<dbReference type="EMBL" id="AL358790">
    <property type="status" value="NOT_ANNOTATED_CDS"/>
    <property type="molecule type" value="Genomic_DNA"/>
</dbReference>
<dbReference type="EMBL" id="BC062997">
    <property type="protein sequence ID" value="AAH62997.1"/>
    <property type="molecule type" value="mRNA"/>
</dbReference>
<dbReference type="EMBL" id="BC063388">
    <property type="protein sequence ID" value="AAH63388.1"/>
    <property type="molecule type" value="mRNA"/>
</dbReference>
<dbReference type="CCDS" id="CCDS7541.1"/>
<dbReference type="PIR" id="A40921">
    <property type="entry name" value="A26366"/>
</dbReference>
<dbReference type="RefSeq" id="NP_000093.1">
    <property type="nucleotide sequence ID" value="NM_000102.4"/>
</dbReference>
<dbReference type="PDB" id="3RUK">
    <property type="method" value="X-ray"/>
    <property type="resolution" value="2.60 A"/>
    <property type="chains" value="A/B/C/D=24-508"/>
</dbReference>
<dbReference type="PDB" id="3SWZ">
    <property type="method" value="X-ray"/>
    <property type="resolution" value="2.40 A"/>
    <property type="chains" value="A/B/C/D=24-508"/>
</dbReference>
<dbReference type="PDB" id="4NKV">
    <property type="method" value="X-ray"/>
    <property type="resolution" value="2.65 A"/>
    <property type="chains" value="A/B/C/D=24-508"/>
</dbReference>
<dbReference type="PDB" id="4NKW">
    <property type="method" value="X-ray"/>
    <property type="resolution" value="2.50 A"/>
    <property type="chains" value="A/B/C/D=24-508"/>
</dbReference>
<dbReference type="PDB" id="4NKX">
    <property type="method" value="X-ray"/>
    <property type="resolution" value="2.79 A"/>
    <property type="chains" value="A/B/C/D=24-508"/>
</dbReference>
<dbReference type="PDB" id="4NKY">
    <property type="method" value="X-ray"/>
    <property type="resolution" value="2.55 A"/>
    <property type="chains" value="A/B/C/D=24-508"/>
</dbReference>
<dbReference type="PDB" id="4NKZ">
    <property type="method" value="X-ray"/>
    <property type="resolution" value="3.00 A"/>
    <property type="chains" value="A/B/C/D=24-508"/>
</dbReference>
<dbReference type="PDB" id="5IRQ">
    <property type="method" value="X-ray"/>
    <property type="resolution" value="2.20 A"/>
    <property type="chains" value="A/B/C/D=24-508"/>
</dbReference>
<dbReference type="PDB" id="5IRV">
    <property type="method" value="X-ray"/>
    <property type="resolution" value="3.10 A"/>
    <property type="chains" value="A/B/C/D=24-508"/>
</dbReference>
<dbReference type="PDB" id="5UYS">
    <property type="method" value="X-ray"/>
    <property type="resolution" value="2.39 A"/>
    <property type="chains" value="A/B/C/D=24-508"/>
</dbReference>
<dbReference type="PDB" id="6CHI">
    <property type="method" value="X-ray"/>
    <property type="resolution" value="2.70 A"/>
    <property type="chains" value="A/B/C/D=24-508"/>
</dbReference>
<dbReference type="PDB" id="6CIR">
    <property type="method" value="X-ray"/>
    <property type="resolution" value="2.65 A"/>
    <property type="chains" value="A/B/C/D=24-508"/>
</dbReference>
<dbReference type="PDB" id="6CIZ">
    <property type="method" value="X-ray"/>
    <property type="resolution" value="2.60 A"/>
    <property type="chains" value="A/B/C/D=24-508"/>
</dbReference>
<dbReference type="PDB" id="6WR0">
    <property type="method" value="X-ray"/>
    <property type="resolution" value="2.70 A"/>
    <property type="chains" value="A/B/C/D=24-508"/>
</dbReference>
<dbReference type="PDB" id="6WR1">
    <property type="method" value="X-ray"/>
    <property type="resolution" value="1.85 A"/>
    <property type="chains" value="A/B=24-508"/>
</dbReference>
<dbReference type="PDB" id="6WW0">
    <property type="method" value="X-ray"/>
    <property type="resolution" value="2.01 A"/>
    <property type="chains" value="A/B/C/D=24-508"/>
</dbReference>
<dbReference type="PDB" id="8FDA">
    <property type="method" value="X-ray"/>
    <property type="resolution" value="2.20 A"/>
    <property type="chains" value="A/B/C/D=24-508"/>
</dbReference>
<dbReference type="PDBsum" id="3RUK"/>
<dbReference type="PDBsum" id="3SWZ"/>
<dbReference type="PDBsum" id="4NKV"/>
<dbReference type="PDBsum" id="4NKW"/>
<dbReference type="PDBsum" id="4NKX"/>
<dbReference type="PDBsum" id="4NKY"/>
<dbReference type="PDBsum" id="4NKZ"/>
<dbReference type="PDBsum" id="5IRQ"/>
<dbReference type="PDBsum" id="5IRV"/>
<dbReference type="PDBsum" id="5UYS"/>
<dbReference type="PDBsum" id="6CHI"/>
<dbReference type="PDBsum" id="6CIR"/>
<dbReference type="PDBsum" id="6CIZ"/>
<dbReference type="PDBsum" id="6WR0"/>
<dbReference type="PDBsum" id="6WR1"/>
<dbReference type="PDBsum" id="6WW0"/>
<dbReference type="PDBsum" id="8FDA"/>
<dbReference type="SMR" id="P05093"/>
<dbReference type="BioGRID" id="107958">
    <property type="interactions" value="17"/>
</dbReference>
<dbReference type="FunCoup" id="P05093">
    <property type="interactions" value="436"/>
</dbReference>
<dbReference type="IntAct" id="P05093">
    <property type="interactions" value="15"/>
</dbReference>
<dbReference type="MINT" id="P05093"/>
<dbReference type="STRING" id="9606.ENSP00000358903"/>
<dbReference type="BindingDB" id="P05093"/>
<dbReference type="ChEMBL" id="CHEMBL3522"/>
<dbReference type="DrugBank" id="DB05812">
    <property type="generic name" value="Abiraterone"/>
</dbReference>
<dbReference type="DrugBank" id="DB04630">
    <property type="generic name" value="Aldosterone"/>
</dbReference>
<dbReference type="DrugBank" id="DB01424">
    <property type="generic name" value="Aminophenazone"/>
</dbReference>
<dbReference type="DrugBank" id="DB09061">
    <property type="generic name" value="Cannabidiol"/>
</dbReference>
<dbReference type="DrugBank" id="DB19193">
    <property type="generic name" value="CFG-920"/>
</dbReference>
<dbReference type="DrugBank" id="DB00882">
    <property type="generic name" value="Clomifene"/>
</dbReference>
<dbReference type="DrugBank" id="DB01234">
    <property type="generic name" value="Dexamethasone"/>
</dbReference>
<dbReference type="DrugBank" id="DB14649">
    <property type="generic name" value="Dexamethasone acetate"/>
</dbReference>
<dbReference type="DrugBank" id="DB08943">
    <property type="generic name" value="Isoconazole"/>
</dbReference>
<dbReference type="DrugBank" id="DB01026">
    <property type="generic name" value="Ketoconazole"/>
</dbReference>
<dbReference type="DrugBank" id="DB05667">
    <property type="generic name" value="Levoketoconazole"/>
</dbReference>
<dbReference type="DrugBank" id="DB14009">
    <property type="generic name" value="Medical Cannabis"/>
</dbReference>
<dbReference type="DrugBank" id="DB14011">
    <property type="generic name" value="Nabiximols"/>
</dbReference>
<dbReference type="DrugBank" id="DB00157">
    <property type="generic name" value="NADH"/>
</dbReference>
<dbReference type="DrugBank" id="DB01708">
    <property type="generic name" value="Prasterone"/>
</dbReference>
<dbReference type="DrugBank" id="DB00396">
    <property type="generic name" value="Progesterone"/>
</dbReference>
<dbReference type="DrugBank" id="DB12275">
    <property type="generic name" value="Seviteronel"/>
</dbReference>
<dbReference type="DrugBank" id="DB02901">
    <property type="generic name" value="Stanolone"/>
</dbReference>
<dbReference type="DrugCentral" id="P05093"/>
<dbReference type="GuidetoPHARMACOLOGY" id="1361"/>
<dbReference type="SwissLipids" id="SLP:000001611"/>
<dbReference type="GlyGen" id="P05093">
    <property type="glycosylation" value="1 site, 1 O-linked glycan (1 site)"/>
</dbReference>
<dbReference type="iPTMnet" id="P05093"/>
<dbReference type="PhosphoSitePlus" id="P05093"/>
<dbReference type="BioMuta" id="CYP17A1"/>
<dbReference type="DMDM" id="117283"/>
<dbReference type="MassIVE" id="P05093"/>
<dbReference type="PaxDb" id="9606-ENSP00000358903"/>
<dbReference type="PeptideAtlas" id="P05093"/>
<dbReference type="ProteomicsDB" id="51789"/>
<dbReference type="Antibodypedia" id="31491">
    <property type="antibodies" value="638 antibodies from 39 providers"/>
</dbReference>
<dbReference type="DNASU" id="1586"/>
<dbReference type="Ensembl" id="ENST00000369887.4">
    <property type="protein sequence ID" value="ENSP00000358903.3"/>
    <property type="gene ID" value="ENSG00000148795.7"/>
</dbReference>
<dbReference type="GeneID" id="1586"/>
<dbReference type="KEGG" id="hsa:1586"/>
<dbReference type="MANE-Select" id="ENST00000369887.4">
    <property type="protein sequence ID" value="ENSP00000358903.3"/>
    <property type="RefSeq nucleotide sequence ID" value="NM_000102.4"/>
    <property type="RefSeq protein sequence ID" value="NP_000093.1"/>
</dbReference>
<dbReference type="AGR" id="HGNC:2593"/>
<dbReference type="CTD" id="1586"/>
<dbReference type="DisGeNET" id="1586"/>
<dbReference type="GeneCards" id="CYP17A1"/>
<dbReference type="HGNC" id="HGNC:2593">
    <property type="gene designation" value="CYP17A1"/>
</dbReference>
<dbReference type="HPA" id="ENSG00000148795">
    <property type="expression patterns" value="Tissue enriched (adrenal)"/>
</dbReference>
<dbReference type="MalaCards" id="CYP17A1"/>
<dbReference type="MIM" id="202110">
    <property type="type" value="phenotype"/>
</dbReference>
<dbReference type="MIM" id="609300">
    <property type="type" value="gene"/>
</dbReference>
<dbReference type="neXtProt" id="NX_P05093"/>
<dbReference type="OpenTargets" id="ENSG00000148795"/>
<dbReference type="Orphanet" id="90796">
    <property type="disease" value="46,XY difference of sex development due to isolated 17,20-lyase deficiency"/>
</dbReference>
<dbReference type="Orphanet" id="90793">
    <property type="disease" value="Congenital adrenal hyperplasia due to 17-alpha-hydroxylase deficiency"/>
</dbReference>
<dbReference type="PharmGKB" id="PA27090"/>
<dbReference type="VEuPathDB" id="HostDB:ENSG00000148795"/>
<dbReference type="eggNOG" id="KOG0156">
    <property type="taxonomic scope" value="Eukaryota"/>
</dbReference>
<dbReference type="GeneTree" id="ENSGT00940000155588"/>
<dbReference type="HOGENOM" id="CLU_001570_22_0_1"/>
<dbReference type="InParanoid" id="P05093"/>
<dbReference type="OMA" id="GPQEAME"/>
<dbReference type="OrthoDB" id="1470350at2759"/>
<dbReference type="PAN-GO" id="P05093">
    <property type="GO annotations" value="4 GO annotations based on evolutionary models"/>
</dbReference>
<dbReference type="PhylomeDB" id="P05093"/>
<dbReference type="TreeFam" id="TF105095"/>
<dbReference type="BioCyc" id="MetaCyc:HS07560-MONOMER"/>
<dbReference type="BRENDA" id="1.14.14.19">
    <property type="organism ID" value="2681"/>
</dbReference>
<dbReference type="BRENDA" id="1.14.14.32">
    <property type="organism ID" value="2681"/>
</dbReference>
<dbReference type="PathwayCommons" id="P05093"/>
<dbReference type="Reactome" id="R-HSA-193048">
    <property type="pathway name" value="Androgen biosynthesis"/>
</dbReference>
<dbReference type="Reactome" id="R-HSA-194002">
    <property type="pathway name" value="Glucocorticoid biosynthesis"/>
</dbReference>
<dbReference type="Reactome" id="R-HSA-5579028">
    <property type="pathway name" value="Defective CYP17A1 causes AH5"/>
</dbReference>
<dbReference type="SABIO-RK" id="P05093"/>
<dbReference type="SignaLink" id="P05093"/>
<dbReference type="SIGNOR" id="P05093"/>
<dbReference type="UniPathway" id="UPA00788"/>
<dbReference type="BioGRID-ORCS" id="1586">
    <property type="hits" value="16 hits in 1163 CRISPR screens"/>
</dbReference>
<dbReference type="ChiTaRS" id="CYP17A1">
    <property type="organism name" value="human"/>
</dbReference>
<dbReference type="EvolutionaryTrace" id="P05093"/>
<dbReference type="GeneWiki" id="CYP17A1"/>
<dbReference type="GenomeRNAi" id="1586"/>
<dbReference type="Pharos" id="P05093">
    <property type="development level" value="Tclin"/>
</dbReference>
<dbReference type="PRO" id="PR:P05093"/>
<dbReference type="Proteomes" id="UP000005640">
    <property type="component" value="Chromosome 10"/>
</dbReference>
<dbReference type="RNAct" id="P05093">
    <property type="molecule type" value="protein"/>
</dbReference>
<dbReference type="Bgee" id="ENSG00000148795">
    <property type="expression patterns" value="Expressed in right adrenal gland and 97 other cell types or tissues"/>
</dbReference>
<dbReference type="ExpressionAtlas" id="P05093">
    <property type="expression patterns" value="baseline and differential"/>
</dbReference>
<dbReference type="GO" id="GO:0030424">
    <property type="term" value="C:axon"/>
    <property type="evidence" value="ECO:0007669"/>
    <property type="project" value="Ensembl"/>
</dbReference>
<dbReference type="GO" id="GO:0005783">
    <property type="term" value="C:endoplasmic reticulum"/>
    <property type="evidence" value="ECO:0000303"/>
    <property type="project" value="ProtInc"/>
</dbReference>
<dbReference type="GO" id="GO:0005789">
    <property type="term" value="C:endoplasmic reticulum membrane"/>
    <property type="evidence" value="ECO:0000304"/>
    <property type="project" value="Reactome"/>
</dbReference>
<dbReference type="GO" id="GO:0043025">
    <property type="term" value="C:neuronal cell body"/>
    <property type="evidence" value="ECO:0007669"/>
    <property type="project" value="Ensembl"/>
</dbReference>
<dbReference type="GO" id="GO:0020037">
    <property type="term" value="F:heme binding"/>
    <property type="evidence" value="ECO:0000314"/>
    <property type="project" value="UniProtKB"/>
</dbReference>
<dbReference type="GO" id="GO:0005506">
    <property type="term" value="F:iron ion binding"/>
    <property type="evidence" value="ECO:0007669"/>
    <property type="project" value="InterPro"/>
</dbReference>
<dbReference type="GO" id="GO:0016829">
    <property type="term" value="F:lyase activity"/>
    <property type="evidence" value="ECO:0007669"/>
    <property type="project" value="UniProtKB-KW"/>
</dbReference>
<dbReference type="GO" id="GO:0019825">
    <property type="term" value="F:oxygen binding"/>
    <property type="evidence" value="ECO:0000304"/>
    <property type="project" value="ProtInc"/>
</dbReference>
<dbReference type="GO" id="GO:0004508">
    <property type="term" value="F:steroid 17-alpha-monooxygenase activity"/>
    <property type="evidence" value="ECO:0000314"/>
    <property type="project" value="UniProtKB"/>
</dbReference>
<dbReference type="GO" id="GO:0006702">
    <property type="term" value="P:androgen biosynthetic process"/>
    <property type="evidence" value="ECO:0000304"/>
    <property type="project" value="Reactome"/>
</dbReference>
<dbReference type="GO" id="GO:0006704">
    <property type="term" value="P:glucocorticoid biosynthetic process"/>
    <property type="evidence" value="ECO:0000304"/>
    <property type="project" value="Reactome"/>
</dbReference>
<dbReference type="GO" id="GO:0042446">
    <property type="term" value="P:hormone biosynthetic process"/>
    <property type="evidence" value="ECO:0000314"/>
    <property type="project" value="UniProtKB"/>
</dbReference>
<dbReference type="GO" id="GO:0042448">
    <property type="term" value="P:progesterone metabolic process"/>
    <property type="evidence" value="ECO:0000314"/>
    <property type="project" value="UniProtKB"/>
</dbReference>
<dbReference type="GO" id="GO:0007548">
    <property type="term" value="P:sex differentiation"/>
    <property type="evidence" value="ECO:0000304"/>
    <property type="project" value="ProtInc"/>
</dbReference>
<dbReference type="GO" id="GO:0006694">
    <property type="term" value="P:steroid biosynthetic process"/>
    <property type="evidence" value="ECO:0000304"/>
    <property type="project" value="ProtInc"/>
</dbReference>
<dbReference type="GO" id="GO:0008202">
    <property type="term" value="P:steroid metabolic process"/>
    <property type="evidence" value="ECO:0000314"/>
    <property type="project" value="UniProtKB"/>
</dbReference>
<dbReference type="CDD" id="cd20673">
    <property type="entry name" value="CYP17A1"/>
    <property type="match status" value="1"/>
</dbReference>
<dbReference type="FunFam" id="1.10.630.10:FF:000002">
    <property type="entry name" value="Cytochrome P450 1A1"/>
    <property type="match status" value="1"/>
</dbReference>
<dbReference type="Gene3D" id="1.10.630.10">
    <property type="entry name" value="Cytochrome P450"/>
    <property type="match status" value="1"/>
</dbReference>
<dbReference type="InterPro" id="IPR001128">
    <property type="entry name" value="Cyt_P450"/>
</dbReference>
<dbReference type="InterPro" id="IPR017972">
    <property type="entry name" value="Cyt_P450_CS"/>
</dbReference>
<dbReference type="InterPro" id="IPR002401">
    <property type="entry name" value="Cyt_P450_E_grp-I"/>
</dbReference>
<dbReference type="InterPro" id="IPR036396">
    <property type="entry name" value="Cyt_P450_sf"/>
</dbReference>
<dbReference type="PANTHER" id="PTHR24289">
    <property type="entry name" value="STEROID 17-ALPHA-HYDROXYLASE/17,20 LYASE"/>
    <property type="match status" value="1"/>
</dbReference>
<dbReference type="PANTHER" id="PTHR24289:SF13">
    <property type="entry name" value="STEROID 17-ALPHA-HYDROXYLASE_17,20 LYASE"/>
    <property type="match status" value="1"/>
</dbReference>
<dbReference type="Pfam" id="PF00067">
    <property type="entry name" value="p450"/>
    <property type="match status" value="1"/>
</dbReference>
<dbReference type="PRINTS" id="PR00463">
    <property type="entry name" value="EP450I"/>
</dbReference>
<dbReference type="PRINTS" id="PR00385">
    <property type="entry name" value="P450"/>
</dbReference>
<dbReference type="SUPFAM" id="SSF48264">
    <property type="entry name" value="Cytochrome P450"/>
    <property type="match status" value="1"/>
</dbReference>
<dbReference type="PROSITE" id="PS00086">
    <property type="entry name" value="CYTOCHROME_P450"/>
    <property type="match status" value="1"/>
</dbReference>
<feature type="chain" id="PRO_0000051931" description="Steroid 17-alpha-hydroxylase/17,20 lyase">
    <location>
        <begin position="1"/>
        <end position="508"/>
    </location>
</feature>
<feature type="binding site" evidence="13">
    <location>
        <position position="202"/>
    </location>
    <ligand>
        <name>substrate</name>
    </ligand>
</feature>
<feature type="binding site" description="axial binding residue">
    <location>
        <position position="442"/>
    </location>
    <ligand>
        <name>heme</name>
        <dbReference type="ChEBI" id="CHEBI:30413"/>
    </ligand>
    <ligandPart>
        <name>Fe</name>
        <dbReference type="ChEBI" id="CHEBI:18248"/>
    </ligandPart>
</feature>
<feature type="sequence variant" id="VAR_011755" description="In dbSNP:rs762563.">
    <original>C</original>
    <variation>W</variation>
    <location>
        <position position="22"/>
    </location>
</feature>
<feature type="sequence variant" id="VAR_022745" description="In AH5; 38% 17alpha-hydroxylase activity and 33% 17,20-lyase activity." evidence="1">
    <original>P</original>
    <variation>L</variation>
    <location>
        <position position="35"/>
    </location>
</feature>
<feature type="sequence variant" id="VAR_001270" description="In AH5; 10% 17alpha-hydroxylase activity and 13% 17,20-lyase activity." evidence="1 9 16">
    <location>
        <position position="53"/>
    </location>
</feature>
<feature type="sequence variant" id="VAR_001271" description="In AH5; dbSNP:rs1183147390." evidence="21">
    <original>Y</original>
    <variation>S</variation>
    <location>
        <position position="64"/>
    </location>
</feature>
<feature type="sequence variant" id="VAR_013147" description="In AH5; dbSNP:rs104894146." evidence="3">
    <original>F</original>
    <variation>C</variation>
    <location>
        <position position="93"/>
    </location>
</feature>
<feature type="sequence variant" id="VAR_073043" description="In AH5; dbSNP:rs104894153." evidence="12">
    <original>R</original>
    <variation>Q</variation>
    <location>
        <position position="96"/>
    </location>
</feature>
<feature type="sequence variant" id="VAR_022746" description="In AH5; 25% of both 17alpha-hydroxylase and 17,20-lyase activities; dbSNP:rs104894138." evidence="1 5 22">
    <original>R</original>
    <variation>W</variation>
    <location>
        <position position="96"/>
    </location>
</feature>
<feature type="sequence variant" id="VAR_001272" description="In AH5; dbSNP:rs104894135." evidence="7">
    <original>S</original>
    <variation>P</variation>
    <location>
        <position position="106"/>
    </location>
</feature>
<feature type="sequence variant" id="VAR_001273" description="In AH5." evidence="21">
    <original>I</original>
    <variation>II</variation>
    <location>
        <position position="112"/>
    </location>
</feature>
<feature type="sequence variant" id="VAR_022747" description="In AH5; dbSNP:rs104894147." evidence="4">
    <original>F</original>
    <variation>V</variation>
    <location>
        <position position="114"/>
    </location>
</feature>
<feature type="sequence variant" id="VAR_022748" description="In AH5; dbSNP:rs104894148." evidence="4">
    <original>D</original>
    <variation>V</variation>
    <location>
        <position position="116"/>
    </location>
</feature>
<feature type="sequence variant" id="VAR_073044" description="In AH5; partial loss of activity." evidence="14">
    <original>W</original>
    <variation>R</variation>
    <location>
        <position position="121"/>
    </location>
</feature>
<feature type="sequence variant" id="VAR_073045" description="In AH5; dbSNP:rs752540777." evidence="11">
    <original>A</original>
    <variation>E</variation>
    <location>
        <position position="174"/>
    </location>
</feature>
<feature type="sequence variant" id="VAR_022749" description="In AH5; 10% 17alpha-hydroxylase and 17,20-lyase activities." evidence="1">
    <original>N</original>
    <variation>D</variation>
    <location>
        <position position="177"/>
    </location>
</feature>
<feature type="sequence variant" id="VAR_022750" description="In AH5; dbSNP:rs104894144." evidence="5">
    <original>Y</original>
    <variation>D</variation>
    <location>
        <position position="329"/>
    </location>
</feature>
<feature type="sequence variant" id="VAR_022751" description="In AH5; complete loss of both 17alpha-hydroxylase and 17,20-lyase activities; dbSNP:rs759060233." evidence="1">
    <location>
        <position position="330"/>
    </location>
</feature>
<feature type="sequence variant" id="VAR_001274" description="In AH5; dbSNP:rs104894137." evidence="8">
    <original>P</original>
    <variation>T</variation>
    <location>
        <position position="342"/>
    </location>
</feature>
<feature type="sequence variant" id="VAR_022752" description="In AH5; dbSNP:rs104894149." evidence="4">
    <original>R</original>
    <variation>C</variation>
    <location>
        <position position="347"/>
    </location>
</feature>
<feature type="sequence variant" id="VAR_001275" description="In AH5; selectively ablates 17,20-lyase activity, while preserving most 17alpha-hydroxylase activity; dbSNP:rs61754278." evidence="2 4 24">
    <original>R</original>
    <variation>H</variation>
    <location>
        <position position="347"/>
    </location>
</feature>
<feature type="sequence variant" id="VAR_001276" description="In AH5; selectively ablates 17,20-lyase activity, while preserving most 17alpha-hydroxylase activity; dbSNP:rs104894139." evidence="2 24">
    <original>R</original>
    <variation>Q</variation>
    <location>
        <position position="358"/>
    </location>
</feature>
<feature type="sequence variant" id="VAR_022753" description="In AH5; dbSNP:rs104894142." evidence="5">
    <original>R</original>
    <variation>C</variation>
    <location>
        <position position="362"/>
    </location>
</feature>
<feature type="sequence variant" id="VAR_001277" description="In AH5; dbSNP:rs760695410." evidence="11 19">
    <original>H</original>
    <variation>L</variation>
    <location>
        <position position="373"/>
    </location>
</feature>
<feature type="sequence variant" id="VAR_073046" description="In AH5; dbSNP:rs1423560123." evidence="9">
    <original>H</original>
    <variation>N</variation>
    <location>
        <position position="373"/>
    </location>
</feature>
<feature type="sequence variant" id="VAR_073047" description="In AH5; complete loss of both 17alpha-hydroxylase and 17,20-lyase activities." evidence="11">
    <original>W</original>
    <variation>L</variation>
    <location>
        <position position="406"/>
    </location>
</feature>
<feature type="sequence variant" id="VAR_022754" description="In AH5; dbSNP:rs104894143." evidence="5">
    <original>W</original>
    <variation>R</variation>
    <location>
        <position position="406"/>
    </location>
</feature>
<feature type="sequence variant" id="VAR_022755" description="In AH5; ablates both 17,20-lyase activity and 17alpha-hydroxylase activity; loss of heme-binding and loss of phosphorylation; dbSNP:rs104894140." evidence="1 2">
    <original>F</original>
    <variation>C</variation>
    <location>
        <position position="417"/>
    </location>
</feature>
<feature type="sequence variant" id="VAR_022756" description="In AH5; dbSNP:rs104894145." evidence="5">
    <original>P</original>
    <variation>L</variation>
    <location>
        <position position="428"/>
    </location>
</feature>
<feature type="sequence variant" id="VAR_001278" description="In AH5; dbSNP:rs777638364." evidence="18">
    <original>R</original>
    <variation>H</variation>
    <location>
        <position position="440"/>
    </location>
</feature>
<feature type="sequence variant" id="VAR_001279" description="In AH5." evidence="20">
    <location>
        <begin position="487"/>
        <end position="489"/>
    </location>
</feature>
<feature type="sequence variant" id="VAR_001280" description="In AH5; dbSNP:rs1250463562." evidence="6">
    <original>R</original>
    <variation>C</variation>
    <location>
        <position position="496"/>
    </location>
</feature>
<feature type="sequence variant" id="VAR_022757" description="In AH5; 30% 17alpha-hydroxylase activity and 29% 17,20-lyase activity; dbSNP:rs763398879." evidence="1">
    <original>R</original>
    <variation>H</variation>
    <location>
        <position position="496"/>
    </location>
</feature>
<feature type="mutagenesis site" description="Increases the affinity for progesterone, resulting in preferential hydroxylation of progesterone at C17 over C16; increases the catalytic efficiency in the 17,20 lyase reaction." evidence="13">
    <original>A</original>
    <variation>L</variation>
    <location>
        <position position="105"/>
    </location>
</feature>
<feature type="strand" evidence="40">
    <location>
        <begin position="36"/>
        <end position="42"/>
    </location>
</feature>
<feature type="helix" evidence="39">
    <location>
        <begin position="49"/>
        <end position="60"/>
    </location>
</feature>
<feature type="strand" evidence="39">
    <location>
        <begin position="62"/>
        <end position="68"/>
    </location>
</feature>
<feature type="strand" evidence="39">
    <location>
        <begin position="71"/>
        <end position="76"/>
    </location>
</feature>
<feature type="helix" evidence="39">
    <location>
        <begin position="79"/>
        <end position="86"/>
    </location>
</feature>
<feature type="turn" evidence="39">
    <location>
        <begin position="87"/>
        <end position="93"/>
    </location>
</feature>
<feature type="helix" evidence="39">
    <location>
        <begin position="100"/>
        <end position="105"/>
    </location>
</feature>
<feature type="turn" evidence="39">
    <location>
        <begin position="106"/>
        <end position="109"/>
    </location>
</feature>
<feature type="strand" evidence="36">
    <location>
        <begin position="111"/>
        <end position="114"/>
    </location>
</feature>
<feature type="helix" evidence="39">
    <location>
        <begin position="119"/>
        <end position="132"/>
    </location>
</feature>
<feature type="helix" evidence="39">
    <location>
        <begin position="133"/>
        <end position="135"/>
    </location>
</feature>
<feature type="strand" evidence="40">
    <location>
        <begin position="136"/>
        <end position="140"/>
    </location>
</feature>
<feature type="helix" evidence="39">
    <location>
        <begin position="142"/>
        <end position="159"/>
    </location>
</feature>
<feature type="turn" evidence="39">
    <location>
        <begin position="160"/>
        <end position="162"/>
    </location>
</feature>
<feature type="strand" evidence="40">
    <location>
        <begin position="163"/>
        <end position="165"/>
    </location>
</feature>
<feature type="helix" evidence="39">
    <location>
        <begin position="168"/>
        <end position="184"/>
    </location>
</feature>
<feature type="helix" evidence="39">
    <location>
        <begin position="193"/>
        <end position="208"/>
    </location>
</feature>
<feature type="helix" evidence="39">
    <location>
        <begin position="213"/>
        <end position="217"/>
    </location>
</feature>
<feature type="helix" evidence="39">
    <location>
        <begin position="219"/>
        <end position="221"/>
    </location>
</feature>
<feature type="helix" evidence="39">
    <location>
        <begin position="228"/>
        <end position="251"/>
    </location>
</feature>
<feature type="helix" evidence="39">
    <location>
        <begin position="262"/>
        <end position="271"/>
    </location>
</feature>
<feature type="strand" evidence="38">
    <location>
        <begin position="276"/>
        <end position="278"/>
    </location>
</feature>
<feature type="helix" evidence="39">
    <location>
        <begin position="284"/>
        <end position="287"/>
    </location>
</feature>
<feature type="helix" evidence="39">
    <location>
        <begin position="289"/>
        <end position="320"/>
    </location>
</feature>
<feature type="helix" evidence="39">
    <location>
        <begin position="322"/>
        <end position="335"/>
    </location>
</feature>
<feature type="strand" evidence="39">
    <location>
        <begin position="338"/>
        <end position="340"/>
    </location>
</feature>
<feature type="helix" evidence="39">
    <location>
        <begin position="344"/>
        <end position="348"/>
    </location>
</feature>
<feature type="helix" evidence="39">
    <location>
        <begin position="351"/>
        <end position="363"/>
    </location>
</feature>
<feature type="strand" evidence="39">
    <location>
        <begin position="376"/>
        <end position="381"/>
    </location>
</feature>
<feature type="strand" evidence="39">
    <location>
        <begin position="384"/>
        <end position="386"/>
    </location>
</feature>
<feature type="strand" evidence="39">
    <location>
        <begin position="391"/>
        <end position="394"/>
    </location>
</feature>
<feature type="helix" evidence="39">
    <location>
        <begin position="396"/>
        <end position="400"/>
    </location>
</feature>
<feature type="turn" evidence="39">
    <location>
        <begin position="403"/>
        <end position="405"/>
    </location>
</feature>
<feature type="strand" evidence="39">
    <location>
        <begin position="406"/>
        <end position="408"/>
    </location>
</feature>
<feature type="helix" evidence="39">
    <location>
        <begin position="414"/>
        <end position="417"/>
    </location>
</feature>
<feature type="strand" evidence="40">
    <location>
        <begin position="422"/>
        <end position="425"/>
    </location>
</feature>
<feature type="helix" evidence="39">
    <location>
        <begin position="438"/>
        <end position="440"/>
    </location>
</feature>
<feature type="helix" evidence="39">
    <location>
        <begin position="445"/>
        <end position="462"/>
    </location>
</feature>
<feature type="strand" evidence="39">
    <location>
        <begin position="463"/>
        <end position="466"/>
    </location>
</feature>
<feature type="strand" evidence="37">
    <location>
        <begin position="469"/>
        <end position="471"/>
    </location>
</feature>
<feature type="strand" evidence="39">
    <location>
        <begin position="479"/>
        <end position="485"/>
    </location>
</feature>
<feature type="strand" evidence="39">
    <location>
        <begin position="491"/>
        <end position="495"/>
    </location>
</feature>
<feature type="helix" evidence="39">
    <location>
        <begin position="497"/>
        <end position="500"/>
    </location>
</feature>
<protein>
    <recommendedName>
        <fullName evidence="27">Steroid 17-alpha-hydroxylase/17,20 lyase</fullName>
        <ecNumber evidence="10 13 15">1.14.14.19</ecNumber>
    </recommendedName>
    <alternativeName>
        <fullName>17-alpha-hydroxyprogesterone aldolase</fullName>
        <ecNumber evidence="10 13 15">1.14.14.32</ecNumber>
    </alternativeName>
    <alternativeName>
        <fullName>CYPXVII</fullName>
    </alternativeName>
    <alternativeName>
        <fullName evidence="26">Cytochrome P450 17A1</fullName>
    </alternativeName>
    <alternativeName>
        <fullName>Cytochrome P450-C17</fullName>
        <shortName evidence="28">Cytochrome P450c17</shortName>
    </alternativeName>
    <alternativeName>
        <fullName>Steroid 17-alpha-monooxygenase</fullName>
    </alternativeName>
</protein>
<gene>
    <name evidence="25 35" type="primary">CYP17A1</name>
    <name type="synonym">CYP17</name>
    <name type="synonym">S17AH</name>
</gene>
<evidence type="ECO:0000269" key="1">
    <source>
    </source>
</evidence>
<evidence type="ECO:0000269" key="2">
    <source>
    </source>
</evidence>
<evidence type="ECO:0000269" key="3">
    <source>
    </source>
</evidence>
<evidence type="ECO:0000269" key="4">
    <source>
    </source>
</evidence>
<evidence type="ECO:0000269" key="5">
    <source>
    </source>
</evidence>
<evidence type="ECO:0000269" key="6">
    <source>
    </source>
</evidence>
<evidence type="ECO:0000269" key="7">
    <source>
    </source>
</evidence>
<evidence type="ECO:0000269" key="8">
    <source>
    </source>
</evidence>
<evidence type="ECO:0000269" key="9">
    <source>
    </source>
</evidence>
<evidence type="ECO:0000269" key="10">
    <source>
    </source>
</evidence>
<evidence type="ECO:0000269" key="11">
    <source>
    </source>
</evidence>
<evidence type="ECO:0000269" key="12">
    <source>
    </source>
</evidence>
<evidence type="ECO:0000269" key="13">
    <source>
    </source>
</evidence>
<evidence type="ECO:0000269" key="14">
    <source>
    </source>
</evidence>
<evidence type="ECO:0000269" key="15">
    <source>
    </source>
</evidence>
<evidence type="ECO:0000269" key="16">
    <source>
    </source>
</evidence>
<evidence type="ECO:0000269" key="17">
    <source>
    </source>
</evidence>
<evidence type="ECO:0000269" key="18">
    <source>
    </source>
</evidence>
<evidence type="ECO:0000269" key="19">
    <source>
    </source>
</evidence>
<evidence type="ECO:0000269" key="20">
    <source>
    </source>
</evidence>
<evidence type="ECO:0000269" key="21">
    <source>
    </source>
</evidence>
<evidence type="ECO:0000269" key="22">
    <source>
    </source>
</evidence>
<evidence type="ECO:0000269" key="23">
    <source>
    </source>
</evidence>
<evidence type="ECO:0000269" key="24">
    <source ref="24"/>
</evidence>
<evidence type="ECO:0000303" key="25">
    <source>
    </source>
</evidence>
<evidence type="ECO:0000303" key="26">
    <source>
    </source>
</evidence>
<evidence type="ECO:0000303" key="27">
    <source>
    </source>
</evidence>
<evidence type="ECO:0000303" key="28">
    <source>
    </source>
</evidence>
<evidence type="ECO:0000305" key="29"/>
<evidence type="ECO:0000305" key="30">
    <source>
    </source>
</evidence>
<evidence type="ECO:0000305" key="31">
    <source>
    </source>
</evidence>
<evidence type="ECO:0000305" key="32">
    <source>
    </source>
</evidence>
<evidence type="ECO:0000305" key="33">
    <source>
    </source>
</evidence>
<evidence type="ECO:0000305" key="34">
    <source>
    </source>
</evidence>
<evidence type="ECO:0000312" key="35">
    <source>
        <dbReference type="HGNC" id="HGNC:2593"/>
    </source>
</evidence>
<evidence type="ECO:0007829" key="36">
    <source>
        <dbReference type="PDB" id="5UYS"/>
    </source>
</evidence>
<evidence type="ECO:0007829" key="37">
    <source>
        <dbReference type="PDB" id="6CIR"/>
    </source>
</evidence>
<evidence type="ECO:0007829" key="38">
    <source>
        <dbReference type="PDB" id="6WR0"/>
    </source>
</evidence>
<evidence type="ECO:0007829" key="39">
    <source>
        <dbReference type="PDB" id="6WR1"/>
    </source>
</evidence>
<evidence type="ECO:0007829" key="40">
    <source>
        <dbReference type="PDB" id="6WW0"/>
    </source>
</evidence>
<comment type="function">
    <text evidence="10 13 15 17 23 33">A cytochrome P450 monooxygenase involved in corticoid and androgen biosynthesis (PubMed:22266943, PubMed:25301938, PubMed:27339894, PubMed:9452426). Catalyzes 17-alpha hydroxylation of C21 steroids, which is common for both pathways. A second oxidative step, required only for androgen synthesis, involves an acyl-carbon cleavage. The 17-alpha hydroxy intermediates, as part of adrenal glucocorticoids biosynthesis pathway, are precursors of cortisol (Probable) (PubMed:25301938, PubMed:9452426). Hydroxylates steroid hormones, pregnenolone and progesterone to form 17-alpha hydroxy metabolites, followed by the cleavage of the C17-C20 bond to form C19 steroids, dehydroepiandrosterone (DHEA) and androstenedione (PubMed:22266943, PubMed:25301938, PubMed:27339894, PubMed:36640554, PubMed:9452426). Has 16-alpha hydroxylase activity. Catalyzes 16-alpha hydroxylation of 17-alpha hydroxy pregnenolone, followed by the cleavage of the C17-C20 bond to form 16-alpha-hydroxy DHEA (PubMed:36640554). Also 16-alpha hydroxylates androgens, relevant for estriol synthesis (PubMed:25301938, PubMed:27339894). Mechanistically, uses molecular oxygen inserting one oxygen atom into a substrate, and reducing the second into a water molecule, with two electrons provided by NADPH via cytochrome P450 reductase (CPR; NADPH-ferrihemoprotein reductase) (PubMed:22266943, PubMed:25301938, PubMed:27339894, PubMed:9452426).</text>
</comment>
<comment type="catalytic activity">
    <reaction evidence="10 13 15">
        <text>a C21-steroid + reduced [NADPH--hemoprotein reductase] + O2 = a 17alpha-hydroxy-C21-steroid + oxidized [NADPH--hemoprotein reductase] + H2O + H(+)</text>
        <dbReference type="Rhea" id="RHEA:65760"/>
        <dbReference type="Rhea" id="RHEA-COMP:11964"/>
        <dbReference type="Rhea" id="RHEA-COMP:11965"/>
        <dbReference type="ChEBI" id="CHEBI:15377"/>
        <dbReference type="ChEBI" id="CHEBI:15378"/>
        <dbReference type="ChEBI" id="CHEBI:15379"/>
        <dbReference type="ChEBI" id="CHEBI:57618"/>
        <dbReference type="ChEBI" id="CHEBI:58210"/>
        <dbReference type="ChEBI" id="CHEBI:61313"/>
        <dbReference type="ChEBI" id="CHEBI:138141"/>
        <dbReference type="EC" id="1.14.14.19"/>
    </reaction>
    <physiologicalReaction direction="left-to-right" evidence="29">
        <dbReference type="Rhea" id="RHEA:65761"/>
    </physiologicalReaction>
</comment>
<comment type="catalytic activity">
    <reaction evidence="13 17 23">
        <text>progesterone + reduced [NADPH--hemoprotein reductase] + O2 = 17alpha-hydroxyprogesterone + oxidized [NADPH--hemoprotein reductase] + H2O + H(+)</text>
        <dbReference type="Rhea" id="RHEA:46308"/>
        <dbReference type="Rhea" id="RHEA-COMP:11964"/>
        <dbReference type="Rhea" id="RHEA-COMP:11965"/>
        <dbReference type="ChEBI" id="CHEBI:15377"/>
        <dbReference type="ChEBI" id="CHEBI:15378"/>
        <dbReference type="ChEBI" id="CHEBI:15379"/>
        <dbReference type="ChEBI" id="CHEBI:17026"/>
        <dbReference type="ChEBI" id="CHEBI:17252"/>
        <dbReference type="ChEBI" id="CHEBI:57618"/>
        <dbReference type="ChEBI" id="CHEBI:58210"/>
        <dbReference type="EC" id="1.14.14.19"/>
    </reaction>
    <physiologicalReaction direction="left-to-right" evidence="34">
        <dbReference type="Rhea" id="RHEA:46309"/>
    </physiologicalReaction>
</comment>
<comment type="catalytic activity">
    <reaction evidence="17 23">
        <text>pregnenolone + reduced [NADPH--hemoprotein reductase] + O2 = 17alpha-hydroxypregnenolone + oxidized [NADPH--hemoprotein reductase] + H2O + H(+)</text>
        <dbReference type="Rhea" id="RHEA:50236"/>
        <dbReference type="Rhea" id="RHEA-COMP:11964"/>
        <dbReference type="Rhea" id="RHEA-COMP:11965"/>
        <dbReference type="ChEBI" id="CHEBI:15377"/>
        <dbReference type="ChEBI" id="CHEBI:15378"/>
        <dbReference type="ChEBI" id="CHEBI:15379"/>
        <dbReference type="ChEBI" id="CHEBI:16581"/>
        <dbReference type="ChEBI" id="CHEBI:28750"/>
        <dbReference type="ChEBI" id="CHEBI:57618"/>
        <dbReference type="ChEBI" id="CHEBI:58210"/>
        <dbReference type="EC" id="1.14.14.19"/>
    </reaction>
    <physiologicalReaction direction="left-to-right" evidence="34">
        <dbReference type="Rhea" id="RHEA:50237"/>
    </physiologicalReaction>
</comment>
<comment type="catalytic activity">
    <reaction evidence="10 15 17">
        <text>17alpha-hydroxyprogesterone + reduced [NADPH--hemoprotein reductase] + O2 = androst-4-ene-3,17-dione + acetate + oxidized [NADPH--hemoprotein reductase] + H2O + 2 H(+)</text>
        <dbReference type="Rhea" id="RHEA:14753"/>
        <dbReference type="Rhea" id="RHEA-COMP:11964"/>
        <dbReference type="Rhea" id="RHEA-COMP:11965"/>
        <dbReference type="ChEBI" id="CHEBI:15377"/>
        <dbReference type="ChEBI" id="CHEBI:15378"/>
        <dbReference type="ChEBI" id="CHEBI:15379"/>
        <dbReference type="ChEBI" id="CHEBI:16422"/>
        <dbReference type="ChEBI" id="CHEBI:17252"/>
        <dbReference type="ChEBI" id="CHEBI:30089"/>
        <dbReference type="ChEBI" id="CHEBI:57618"/>
        <dbReference type="ChEBI" id="CHEBI:58210"/>
        <dbReference type="EC" id="1.14.14.32"/>
    </reaction>
    <physiologicalReaction direction="left-to-right" evidence="30">
        <dbReference type="Rhea" id="RHEA:14754"/>
    </physiologicalReaction>
</comment>
<comment type="catalytic activity">
    <reaction evidence="15">
        <text>17alpha-hydroxyprogesterone + reduced [NADPH--hemoprotein reductase] + O2 = 16alpha,17alpha-dihydroxyprogesterone + oxidized [NADPH--hemoprotein reductase] + H2O + H(+)</text>
        <dbReference type="Rhea" id="RHEA:53216"/>
        <dbReference type="Rhea" id="RHEA-COMP:11964"/>
        <dbReference type="Rhea" id="RHEA-COMP:11965"/>
        <dbReference type="ChEBI" id="CHEBI:763"/>
        <dbReference type="ChEBI" id="CHEBI:15377"/>
        <dbReference type="ChEBI" id="CHEBI:15378"/>
        <dbReference type="ChEBI" id="CHEBI:15379"/>
        <dbReference type="ChEBI" id="CHEBI:17252"/>
        <dbReference type="ChEBI" id="CHEBI:57618"/>
        <dbReference type="ChEBI" id="CHEBI:58210"/>
    </reaction>
    <physiologicalReaction direction="left-to-right" evidence="31">
        <dbReference type="Rhea" id="RHEA:53217"/>
    </physiologicalReaction>
</comment>
<comment type="catalytic activity">
    <reaction evidence="15">
        <text>16alpha,17alpha-dihydroxyprogesterone + reduced [NADPH--hemoprotein reductase] + O2 = 6beta,16alpha,17alpha-trihydroxyprogesterone + oxidized [NADPH--hemoprotein reductase] + H2O + H(+)</text>
        <dbReference type="Rhea" id="RHEA:53220"/>
        <dbReference type="Rhea" id="RHEA-COMP:11964"/>
        <dbReference type="Rhea" id="RHEA-COMP:11965"/>
        <dbReference type="ChEBI" id="CHEBI:763"/>
        <dbReference type="ChEBI" id="CHEBI:15377"/>
        <dbReference type="ChEBI" id="CHEBI:15378"/>
        <dbReference type="ChEBI" id="CHEBI:15379"/>
        <dbReference type="ChEBI" id="CHEBI:57618"/>
        <dbReference type="ChEBI" id="CHEBI:58210"/>
        <dbReference type="ChEBI" id="CHEBI:137046"/>
    </reaction>
    <physiologicalReaction direction="left-to-right" evidence="31">
        <dbReference type="Rhea" id="RHEA:53221"/>
    </physiologicalReaction>
</comment>
<comment type="catalytic activity">
    <reaction evidence="10 13 15">
        <text>17alpha-hydroxypregnenolone + reduced [NADPH--hemoprotein reductase] + O2 = 3beta-hydroxyandrost-5-en-17-one + acetate + oxidized [NADPH--hemoprotein reductase] + H2O + 2 H(+)</text>
        <dbReference type="Rhea" id="RHEA:50244"/>
        <dbReference type="Rhea" id="RHEA-COMP:11964"/>
        <dbReference type="Rhea" id="RHEA-COMP:11965"/>
        <dbReference type="ChEBI" id="CHEBI:15377"/>
        <dbReference type="ChEBI" id="CHEBI:15378"/>
        <dbReference type="ChEBI" id="CHEBI:15379"/>
        <dbReference type="ChEBI" id="CHEBI:28689"/>
        <dbReference type="ChEBI" id="CHEBI:28750"/>
        <dbReference type="ChEBI" id="CHEBI:30089"/>
        <dbReference type="ChEBI" id="CHEBI:57618"/>
        <dbReference type="ChEBI" id="CHEBI:58210"/>
        <dbReference type="EC" id="1.14.14.32"/>
    </reaction>
    <physiologicalReaction direction="left-to-right" evidence="30">
        <dbReference type="Rhea" id="RHEA:50245"/>
    </physiologicalReaction>
</comment>
<comment type="catalytic activity">
    <reaction evidence="13 15">
        <text>16alpha,17alpha-dihydroxypregnenolone + reduced [NADPH--hemoprotein reductase] + O2 = 3beta,16alpha-dihydroxy-androst-5-en-17-one + acetate + oxidized [NADPH--hemoprotein reductase] + H2O + 2 H(+)</text>
        <dbReference type="Rhea" id="RHEA:53224"/>
        <dbReference type="Rhea" id="RHEA-COMP:11964"/>
        <dbReference type="Rhea" id="RHEA-COMP:11965"/>
        <dbReference type="ChEBI" id="CHEBI:15377"/>
        <dbReference type="ChEBI" id="CHEBI:15378"/>
        <dbReference type="ChEBI" id="CHEBI:15379"/>
        <dbReference type="ChEBI" id="CHEBI:27771"/>
        <dbReference type="ChEBI" id="CHEBI:30089"/>
        <dbReference type="ChEBI" id="CHEBI:57618"/>
        <dbReference type="ChEBI" id="CHEBI:58210"/>
        <dbReference type="ChEBI" id="CHEBI:137049"/>
    </reaction>
    <physiologicalReaction direction="left-to-right" evidence="31">
        <dbReference type="Rhea" id="RHEA:53225"/>
    </physiologicalReaction>
</comment>
<comment type="catalytic activity">
    <reaction evidence="15">
        <text>3beta-hydroxyandrost-5-en-17-one + reduced [NADPH--hemoprotein reductase] + O2 = 3beta,16alpha-dihydroxy-androst-5-en-17-one + oxidized [NADPH--hemoprotein reductase] + H2O + H(+)</text>
        <dbReference type="Rhea" id="RHEA:47220"/>
        <dbReference type="Rhea" id="RHEA-COMP:11964"/>
        <dbReference type="Rhea" id="RHEA-COMP:11965"/>
        <dbReference type="ChEBI" id="CHEBI:15377"/>
        <dbReference type="ChEBI" id="CHEBI:15378"/>
        <dbReference type="ChEBI" id="CHEBI:15379"/>
        <dbReference type="ChEBI" id="CHEBI:27771"/>
        <dbReference type="ChEBI" id="CHEBI:28689"/>
        <dbReference type="ChEBI" id="CHEBI:57618"/>
        <dbReference type="ChEBI" id="CHEBI:58210"/>
    </reaction>
    <physiologicalReaction direction="left-to-right" evidence="31">
        <dbReference type="Rhea" id="RHEA:47221"/>
    </physiologicalReaction>
</comment>
<comment type="catalytic activity">
    <reaction evidence="15">
        <text>androst-4-ene-3,17-dione + reduced [NADPH--hemoprotein reductase] + O2 = 16alpha-hydroxyandrost-4-ene-3,17-dione + oxidized [NADPH--hemoprotein reductase] + H2O + H(+)</text>
        <dbReference type="Rhea" id="RHEA:53228"/>
        <dbReference type="Rhea" id="RHEA-COMP:11964"/>
        <dbReference type="Rhea" id="RHEA-COMP:11965"/>
        <dbReference type="ChEBI" id="CHEBI:15377"/>
        <dbReference type="ChEBI" id="CHEBI:15378"/>
        <dbReference type="ChEBI" id="CHEBI:15379"/>
        <dbReference type="ChEBI" id="CHEBI:16422"/>
        <dbReference type="ChEBI" id="CHEBI:27582"/>
        <dbReference type="ChEBI" id="CHEBI:57618"/>
        <dbReference type="ChEBI" id="CHEBI:58210"/>
    </reaction>
    <physiologicalReaction direction="left-to-right" evidence="31">
        <dbReference type="Rhea" id="RHEA:53229"/>
    </physiologicalReaction>
</comment>
<comment type="cofactor">
    <cofactor evidence="10 13">
        <name>heme</name>
        <dbReference type="ChEBI" id="CHEBI:30413"/>
    </cofactor>
</comment>
<comment type="activity regulation">
    <text evidence="1 15 23">Regulated predominantly by intracellular cAMP levels (PubMed:10720067). The 17,20-lyase activity is stimulated by cytochrome b5, which acts as an allosteric effector increasing the Vmax of the lyase activity (PubMed:27339894, PubMed:9452426).</text>
</comment>
<comment type="biophysicochemical properties">
    <kinetics>
        <KM evidence="13">10.5 uM for progesterone (17-alpha hydroxylation)</KM>
        <KM evidence="17">5.87 uM for progesterone (17-alpha hydroxylation)</KM>
        <KM evidence="13">0.93 uM for pregnenolone (17-alpha hydroxylation)</KM>
        <KM evidence="17">1.19 uM for pregnenolone (17-alpha hydroxylation)</KM>
        <KM evidence="13">1.2 uM for 17alpha-hydroxypregnenolone (17,20 lyase activity)</KM>
        <KM evidence="17">21.9 uM for 17alpha-hydroxyprogesterone (17,20 lyase activity)</KM>
        <text>kcat is 1.01 min(-1) with progesterone as substrate. kcat is 0.39 min(-1) with pregnenolone as substrate. kcat is 0.24 min(-1) with 17alpha-hydroxypregnenolone as substrate.</text>
    </kinetics>
</comment>
<comment type="pathway">
    <text evidence="10 13 15 23">Steroid hormone biosynthesis.</text>
</comment>
<comment type="pathway">
    <text evidence="13 23">Steroid biosynthesis; glucocorticoid biosynthesis.</text>
</comment>
<comment type="subcellular location">
    <subcellularLocation>
        <location evidence="32">Endoplasmic reticulum membrane</location>
    </subcellularLocation>
    <subcellularLocation>
        <location evidence="32">Microsome membrane</location>
    </subcellularLocation>
</comment>
<comment type="PTM">
    <text evidence="1">Phosphorylation is necessary for 17,20-lyase, but not for 17-alpha-hydroxylase activity.</text>
</comment>
<comment type="disease" evidence="1 2 3 4 5 6 7 8 9 11 12 14 16 18 19 20 21 22 24">
    <disease id="DI-00045">
        <name>Adrenal hyperplasia 5</name>
        <acronym>AH5</acronym>
        <description>A form of congenital adrenal hyperplasia, a common recessive disease due to defective synthesis of cortisol. Congenital adrenal hyperplasia is characterized by androgen excess leading to ambiguous genitalia in affected females, rapid somatic growth during childhood in both sexes with premature closure of the epiphyses and short adult stature. Four clinical types: 'salt wasting' (SW, the most severe type), 'simple virilizing' (SV, less severely affected patients), with normal aldosterone biosynthesis, 'non-classic form' or late-onset (NC or LOAH) and 'cryptic' (asymptomatic).</description>
        <dbReference type="MIM" id="202110"/>
    </disease>
    <text>The disease is caused by variants affecting the gene represented in this entry.</text>
</comment>
<comment type="similarity">
    <text evidence="29">Belongs to the cytochrome P450 family.</text>
</comment>
<organism>
    <name type="scientific">Homo sapiens</name>
    <name type="common">Human</name>
    <dbReference type="NCBI Taxonomy" id="9606"/>
    <lineage>
        <taxon>Eukaryota</taxon>
        <taxon>Metazoa</taxon>
        <taxon>Chordata</taxon>
        <taxon>Craniata</taxon>
        <taxon>Vertebrata</taxon>
        <taxon>Euteleostomi</taxon>
        <taxon>Mammalia</taxon>
        <taxon>Eutheria</taxon>
        <taxon>Euarchontoglires</taxon>
        <taxon>Primates</taxon>
        <taxon>Haplorrhini</taxon>
        <taxon>Catarrhini</taxon>
        <taxon>Hominidae</taxon>
        <taxon>Homo</taxon>
    </lineage>
</organism>
<reference key="1">
    <citation type="journal article" date="1987" name="Proc. Natl. Acad. Sci. U.S.A.">
        <title>Cytochrome P450c17 (steroid 17 alpha-hydroxylase/17,20 lyase): cloning of human adrenal and testis cDNAs indicates the same gene is expressed in both tissues.</title>
        <authorList>
            <person name="Chung B.-C."/>
            <person name="Picado-Leonard J."/>
            <person name="Haniu M."/>
            <person name="Bienkowski M."/>
            <person name="Hall P.F."/>
            <person name="Shively J.E."/>
            <person name="Miller W.L."/>
        </authorList>
    </citation>
    <scope>NUCLEOTIDE SEQUENCE [MRNA]</scope>
</reference>
<reference key="2">
    <citation type="journal article" date="1987" name="DNA">
        <title>Cloning and sequence of the human gene for P450c17 (steroid 17 alpha-hydroxylase/17,20 lyase): similarity with the gene for P450c21.</title>
        <authorList>
            <person name="Picado-Leonard J."/>
            <person name="Miller W.L."/>
        </authorList>
    </citation>
    <scope>NUCLEOTIDE SEQUENCE [GENOMIC DNA]</scope>
</reference>
<reference key="3">
    <citation type="journal article" date="1987" name="Mol. Endocrinol.">
        <title>Characterization of complementary deoxyribonucleic acid for human adrenocortical 17 alpha-hydroxylase: a probe for analysis of 17 alpha-hydroxylase deficiency.</title>
        <authorList>
            <person name="Bradshaw K.D."/>
            <person name="Waterman M.R."/>
            <person name="Couch R.T."/>
            <person name="Simpson E.R."/>
            <person name="Zuber M.X."/>
        </authorList>
    </citation>
    <scope>NUCLEOTIDE SEQUENCE [MRNA]</scope>
</reference>
<reference key="4">
    <citation type="journal article" date="1990" name="Mol. Endocrinol.">
        <title>Tissue-specific, cyclic adenosine 3',5'-monophosphate-induced, and phorbol ester-repressed transcription from the human P450c17 promoter in mouse cells.</title>
        <authorList>
            <person name="Brentano S.T."/>
            <person name="Picado-Leonard J."/>
            <person name="Mellon S.H."/>
            <person name="Moore C.C."/>
            <person name="Miller W.L."/>
        </authorList>
    </citation>
    <scope>NUCLEOTIDE SEQUENCE [GENOMIC DNA]</scope>
</reference>
<reference key="5">
    <citation type="journal article" date="1988" name="Mol. Endocrinol.">
        <title>Structural characterization of normal and mutant human steroid 17 alpha-hydroxylase genes: molecular basis of one example of combined 17 alpha-hydroxylase/17,20 lyase deficiency.</title>
        <authorList>
            <person name="Kagimoto M."/>
            <person name="Winter J.S.D."/>
            <person name="Kagimoto K."/>
            <person name="Simpson E.R."/>
            <person name="Waterman M.R."/>
        </authorList>
    </citation>
    <scope>NUCLEOTIDE SEQUENCE [GENOMIC DNA]</scope>
</reference>
<reference key="6">
    <citation type="submission" date="2004-10" db="EMBL/GenBank/DDBJ databases">
        <title>Cloning of human full-length CDSs in BD Creator(TM) system donor vector.</title>
        <authorList>
            <person name="Kalnine N."/>
            <person name="Chen X."/>
            <person name="Rolfs A."/>
            <person name="Halleck A."/>
            <person name="Hines L."/>
            <person name="Eisenstein S."/>
            <person name="Koundinya M."/>
            <person name="Raphael J."/>
            <person name="Moreira D."/>
            <person name="Kelley T."/>
            <person name="LaBaer J."/>
            <person name="Lin Y."/>
            <person name="Phelan M."/>
            <person name="Farmer A."/>
        </authorList>
    </citation>
    <scope>NUCLEOTIDE SEQUENCE [LARGE SCALE MRNA]</scope>
</reference>
<reference key="7">
    <citation type="journal article" date="2004" name="Nature">
        <title>The DNA sequence and comparative analysis of human chromosome 10.</title>
        <authorList>
            <person name="Deloukas P."/>
            <person name="Earthrowl M.E."/>
            <person name="Grafham D.V."/>
            <person name="Rubenfield M."/>
            <person name="French L."/>
            <person name="Steward C.A."/>
            <person name="Sims S.K."/>
            <person name="Jones M.C."/>
            <person name="Searle S."/>
            <person name="Scott C."/>
            <person name="Howe K."/>
            <person name="Hunt S.E."/>
            <person name="Andrews T.D."/>
            <person name="Gilbert J.G.R."/>
            <person name="Swarbreck D."/>
            <person name="Ashurst J.L."/>
            <person name="Taylor A."/>
            <person name="Battles J."/>
            <person name="Bird C.P."/>
            <person name="Ainscough R."/>
            <person name="Almeida J.P."/>
            <person name="Ashwell R.I.S."/>
            <person name="Ambrose K.D."/>
            <person name="Babbage A.K."/>
            <person name="Bagguley C.L."/>
            <person name="Bailey J."/>
            <person name="Banerjee R."/>
            <person name="Bates K."/>
            <person name="Beasley H."/>
            <person name="Bray-Allen S."/>
            <person name="Brown A.J."/>
            <person name="Brown J.Y."/>
            <person name="Burford D.C."/>
            <person name="Burrill W."/>
            <person name="Burton J."/>
            <person name="Cahill P."/>
            <person name="Camire D."/>
            <person name="Carter N.P."/>
            <person name="Chapman J.C."/>
            <person name="Clark S.Y."/>
            <person name="Clarke G."/>
            <person name="Clee C.M."/>
            <person name="Clegg S."/>
            <person name="Corby N."/>
            <person name="Coulson A."/>
            <person name="Dhami P."/>
            <person name="Dutta I."/>
            <person name="Dunn M."/>
            <person name="Faulkner L."/>
            <person name="Frankish A."/>
            <person name="Frankland J.A."/>
            <person name="Garner P."/>
            <person name="Garnett J."/>
            <person name="Gribble S."/>
            <person name="Griffiths C."/>
            <person name="Grocock R."/>
            <person name="Gustafson E."/>
            <person name="Hammond S."/>
            <person name="Harley J.L."/>
            <person name="Hart E."/>
            <person name="Heath P.D."/>
            <person name="Ho T.P."/>
            <person name="Hopkins B."/>
            <person name="Horne J."/>
            <person name="Howden P.J."/>
            <person name="Huckle E."/>
            <person name="Hynds C."/>
            <person name="Johnson C."/>
            <person name="Johnson D."/>
            <person name="Kana A."/>
            <person name="Kay M."/>
            <person name="Kimberley A.M."/>
            <person name="Kershaw J.K."/>
            <person name="Kokkinaki M."/>
            <person name="Laird G.K."/>
            <person name="Lawlor S."/>
            <person name="Lee H.M."/>
            <person name="Leongamornlert D.A."/>
            <person name="Laird G."/>
            <person name="Lloyd C."/>
            <person name="Lloyd D.M."/>
            <person name="Loveland J."/>
            <person name="Lovell J."/>
            <person name="McLaren S."/>
            <person name="McLay K.E."/>
            <person name="McMurray A."/>
            <person name="Mashreghi-Mohammadi M."/>
            <person name="Matthews L."/>
            <person name="Milne S."/>
            <person name="Nickerson T."/>
            <person name="Nguyen M."/>
            <person name="Overton-Larty E."/>
            <person name="Palmer S.A."/>
            <person name="Pearce A.V."/>
            <person name="Peck A.I."/>
            <person name="Pelan S."/>
            <person name="Phillimore B."/>
            <person name="Porter K."/>
            <person name="Rice C.M."/>
            <person name="Rogosin A."/>
            <person name="Ross M.T."/>
            <person name="Sarafidou T."/>
            <person name="Sehra H.K."/>
            <person name="Shownkeen R."/>
            <person name="Skuce C.D."/>
            <person name="Smith M."/>
            <person name="Standring L."/>
            <person name="Sycamore N."/>
            <person name="Tester J."/>
            <person name="Thorpe A."/>
            <person name="Torcasso W."/>
            <person name="Tracey A."/>
            <person name="Tromans A."/>
            <person name="Tsolas J."/>
            <person name="Wall M."/>
            <person name="Walsh J."/>
            <person name="Wang H."/>
            <person name="Weinstock K."/>
            <person name="West A.P."/>
            <person name="Willey D.L."/>
            <person name="Whitehead S.L."/>
            <person name="Wilming L."/>
            <person name="Wray P.W."/>
            <person name="Young L."/>
            <person name="Chen Y."/>
            <person name="Lovering R.C."/>
            <person name="Moschonas N.K."/>
            <person name="Siebert R."/>
            <person name="Fechtel K."/>
            <person name="Bentley D."/>
            <person name="Durbin R.M."/>
            <person name="Hubbard T."/>
            <person name="Doucette-Stamm L."/>
            <person name="Beck S."/>
            <person name="Smith D.R."/>
            <person name="Rogers J."/>
        </authorList>
    </citation>
    <scope>NUCLEOTIDE SEQUENCE [LARGE SCALE GENOMIC DNA]</scope>
</reference>
<reference key="8">
    <citation type="journal article" date="2004" name="Genome Res.">
        <title>The status, quality, and expansion of the NIH full-length cDNA project: the Mammalian Gene Collection (MGC).</title>
        <authorList>
            <consortium name="The MGC Project Team"/>
        </authorList>
    </citation>
    <scope>NUCLEOTIDE SEQUENCE [LARGE SCALE MRNA]</scope>
    <source>
        <tissue>Brain</tissue>
    </source>
</reference>
<reference key="9">
    <citation type="journal article" date="1998" name="J. Biol. Chem.">
        <title>Cytochrome b5 augments the 17,20-lyase activity of human P450c17 without direct electron transfer.</title>
        <authorList>
            <person name="Auchus R.J."/>
            <person name="Lee T.C."/>
            <person name="Miller W.L."/>
        </authorList>
    </citation>
    <scope>FUNCTION</scope>
    <scope>CATALYTIC ACTIVITY</scope>
    <scope>ACTIVITY REGULATION</scope>
    <scope>PATHWAY</scope>
</reference>
<reference key="10">
    <citation type="journal article" date="2016" name="J. Biol. Chem.">
        <title>Mechanism of 17alpha,20-Lyase and New Hydroxylation Reactions of Human Cytochrome P450 17A1: 18O LABELING AND OXYGEN SURROGATE EVIDENCE FOR A ROLE OF A PERFERRYL OXYGEN.</title>
        <authorList>
            <person name="Yoshimoto F.K."/>
            <person name="Gonzalez E."/>
            <person name="Auchus R.J."/>
            <person name="Guengerich F.P."/>
        </authorList>
    </citation>
    <scope>FUNCTION</scope>
    <scope>CATALYTIC ACTIVITY</scope>
    <scope>ACTIVITY REGULATION</scope>
    <scope>PATHWAY</scope>
</reference>
<reference key="11">
    <citation type="journal article" date="2023" name="J. Inorg. Biochem.">
        <title>Hydroxylation and lyase reactions of steroids catalyzed by mouse cytochrome P450 17A1 (Cyp17a1).</title>
        <authorList>
            <person name="Lee S.G."/>
            <person name="Kim V."/>
            <person name="Lee G.H."/>
            <person name="Kim C."/>
            <person name="Jeong E."/>
            <person name="Guengerich F.P."/>
            <person name="Kim D."/>
        </authorList>
    </citation>
    <scope>FUNCTION</scope>
    <scope>CATALYTIC ACTIVITY</scope>
    <scope>BIOPHYSICOCHEMICAL PROPERTIES</scope>
</reference>
<reference key="12">
    <citation type="journal article" date="1999" name="Mol. Endocrinol.">
        <title>Molecular modeling of human P450c17 (17alpha-hydroxylase/17,20-lyase): insights into reaction mechanisms and effects of mutations.</title>
        <authorList>
            <person name="Auchus R.J."/>
            <person name="Miller W.L."/>
        </authorList>
    </citation>
    <scope>3D-STRUCTURE MODELING OF 48-501</scope>
</reference>
<reference key="13">
    <citation type="journal article" date="2012" name="Nature">
        <title>Structures of cytochrome P450 17A1 with prostate cancer drugs abiraterone and TOK-001.</title>
        <authorList>
            <person name="DeVore N.M."/>
            <person name="Scott E.E."/>
        </authorList>
    </citation>
    <scope>X-RAY CRYSTALLOGRAPHY (2.4 ANGSTROMS) OF 24-508 IN COMPLEXES WITH HEME; ABIRATERONE AND TOK-001</scope>
    <scope>FUNCTION</scope>
    <scope>CATALYTIC ACTIVITY</scope>
    <scope>COFACTOR</scope>
    <scope>PATHWAY</scope>
</reference>
<reference key="14">
    <citation type="journal article" date="2014" name="J. Biol. Chem.">
        <title>Structures of human steroidogenic cytochrome P450 17A1 with substrates.</title>
        <authorList>
            <person name="Petrunak E.M."/>
            <person name="DeVore N.M."/>
            <person name="Porubsky P.R."/>
            <person name="Scott E.E."/>
        </authorList>
    </citation>
    <scope>X-RAY CRYSTALLOGRAPHY (2.50 ANGSTROMS) OF 24-508 IN COMPLEX WITH HEME AND PREGNENOLONE</scope>
    <scope>FUNCTION</scope>
    <scope>CATALYTIC ACTIVITY</scope>
    <scope>COFACTOR</scope>
    <scope>BIOPHYSICOCHEMICAL PROPERTIES</scope>
    <scope>PATHWAY</scope>
    <scope>MUTAGENESIS OF ALA-105</scope>
</reference>
<reference key="15">
    <citation type="journal article" date="1989" name="J. Biol. Chem.">
        <title>Deletion of a phenylalanine in the N-terminal region of human cytochrome P-450(17 alpha) results in partial combined 17 alpha-hydroxylase/17,20-lyase deficiency.</title>
        <authorList>
            <person name="Yanase T."/>
            <person name="Kagimoto M."/>
            <person name="Suzuki S."/>
            <person name="Hashiba K."/>
            <person name="Simpson E.R."/>
            <person name="Waterman M.R."/>
        </authorList>
    </citation>
    <scope>VARIANT AH5 PHE-53 DEL</scope>
    <scope>SUBCELLULAR LOCATION</scope>
</reference>
<reference key="16">
    <citation type="journal article" date="1991" name="J. Biol. Chem.">
        <title>Missense mutation serine106--&gt;proline causes 17 alpha-hydroxylase deficiency.</title>
        <authorList>
            <person name="Lin D."/>
            <person name="Harikrishna J.A."/>
            <person name="Moore C.C.D."/>
            <person name="Jones K.L."/>
            <person name="Miller W.L."/>
        </authorList>
    </citation>
    <scope>VARIANT AH5 PRO-106</scope>
</reference>
<reference key="17">
    <citation type="journal article" date="1992" name="Biochim. Biophys. Acta">
        <title>Molecular basis of apparent isolated 17,20-lyase deficiency: compound heterozygous mutations in the C-terminal region (Arg(496)--&gt;Cys, Gln(461)--&gt;Stop) actually cause combined 17 alpha-hydroxylase/17,20-lyase deficiency.</title>
        <authorList>
            <person name="Yanase T."/>
            <person name="Waterman M.R."/>
            <person name="Zachmann M."/>
            <person name="Winter J.S.D."/>
            <person name="Kagimoto M."/>
        </authorList>
    </citation>
    <scope>VARIANT AH5 CYS-496</scope>
</reference>
<reference key="18">
    <citation type="journal article" date="1992" name="J. Clin. Endocrinol. Metab.">
        <title>Compound heterozygous mutations (Arg 239--&gt;Stop, Pro 342--&gt;Thr) in the CYP17 (P45017 alpha) gene lead to ambiguous external genitalia in a male patient with partial combined 17 alpha-hydroxylase/17,20-lyase deficiency.</title>
        <authorList>
            <person name="Ahlgren R."/>
            <person name="Yanase T."/>
            <person name="Simpson E.R."/>
            <person name="Winter J.S.D."/>
            <person name="Waterman M.R."/>
        </authorList>
    </citation>
    <scope>VARIANT AH5 THR-342</scope>
</reference>
<reference key="19">
    <citation type="journal article" date="1993" name="J. Biol. Chem.">
        <title>Expression and purification of functional human 17 alpha-hydroxylase/17,20-lyase (P450c17) in Escherichia coli. Use of this system for study of a novel form of combined 17 alpha-hydroxylase/17,20-lyase deficiency.</title>
        <authorList>
            <person name="Imai T."/>
            <person name="Globerman H."/>
            <person name="Gertner J.M."/>
            <person name="Kagawa N."/>
            <person name="Waterman M.R."/>
        </authorList>
    </citation>
    <scope>VARIANTS AH5 SER-64 AND ILE-112 INS</scope>
</reference>
<reference key="20">
    <citation type="journal article" date="1993" name="J. Biol. Chem.">
        <title>Mutation of histidine 373 to leucine in cytochrome P450c17 causes 17 alpha-hydroxylase deficiency.</title>
        <authorList>
            <person name="Monno S."/>
            <person name="Ogawa H."/>
            <person name="Date T."/>
            <person name="Fujioka M."/>
            <person name="Miller W.L."/>
            <person name="Kobayashi M."/>
        </authorList>
    </citation>
    <scope>VARIANT AH5 LEU-373</scope>
</reference>
<reference key="21">
    <citation type="journal article" date="1993" name="J. Clin. Endocrinol. Metab.">
        <title>Deletion of amino acids Asp487-Ser488-Phe489 in human cytochrome P450c17 causes severe 17 alpha-hydroxylase deficiency.</title>
        <authorList>
            <person name="Fardella C.E."/>
            <person name="Zhang L.H."/>
            <person name="Mahacholklertwattana P."/>
            <person name="Lin D."/>
            <person name="Miller W.L."/>
        </authorList>
    </citation>
    <scope>VARIANT AH5 487-ASP--PHE-489 DEL</scope>
</reference>
<reference key="22">
    <citation type="journal article" date="1994" name="J. Clin. Endocrinol. Metab.">
        <title>Point mutation of Arg440 to His in cytochrome P450c17 causes severe 17 alpha-hydroxylase deficiency.</title>
        <authorList>
            <person name="Fardella C.E."/>
            <person name="Hum D.W."/>
            <person name="Homoki J."/>
            <person name="Miller W.L."/>
        </authorList>
    </citation>
    <scope>VARIANT AH5 HIS-440</scope>
</reference>
<reference key="23">
    <citation type="journal article" date="1996" name="J. Clin. Endocrinol. Metab.">
        <title>Mutation R96W in cytochrome P450c17 gene causes combined 17 alpha-hydroxylase/17-20-lyase deficiency in two French Canadian patients.</title>
        <authorList>
            <person name="Laflamme N."/>
            <person name="Leblanc J.-F."/>
            <person name="Mailloux J."/>
            <person name="Faure N."/>
            <person name="Labrie F."/>
            <person name="Simard J."/>
        </authorList>
    </citation>
    <scope>VARIANT AH5 TRP-96</scope>
</reference>
<reference key="24">
    <citation type="journal article" date="1996" name="Pediatr. Res.">
        <title>The molecular basis of isolated 17,20 lyase deficiency.</title>
        <authorList>
            <person name="Geller D.H."/>
            <person name="Mendonca B.B."/>
            <person name="Miller W.L."/>
        </authorList>
    </citation>
    <scope>VARIANTS AH5 HIS-347 AND GLN-358</scope>
</reference>
<reference key="25">
    <citation type="journal article" date="2000" name="J. Clin. Endocrinol. Metab.">
        <title>17alpha-hydroxylase/17,20-lyase deficiency as a model to study enzymatic activity regulation: role of phosphorylation.</title>
        <authorList>
            <person name="Biason-Lauber A."/>
            <person name="Kempken B."/>
            <person name="Werder E."/>
            <person name="Forest M.G."/>
            <person name="Einaudi S."/>
            <person name="Ranke M.B."/>
            <person name="Matsuo N."/>
            <person name="Brunelli V."/>
            <person name="Schoenle E.J."/>
            <person name="Zachmann M."/>
        </authorList>
    </citation>
    <scope>VARIANTS AH5 LEU-35; PHE-53 DEL; TRP-96; ASP-177; GLU-330 DEL; CYS-417 AND HIS-496</scope>
    <scope>PHOSPHORYLATION</scope>
</reference>
<reference key="26">
    <citation type="journal article" date="2001" name="J. Clin. Endocrinol. Metab.">
        <title>Pitfalls in characterizing P450c17 mutations associated with isolated 17,20-lyase deficiency.</title>
        <authorList>
            <person name="Gupta M.K."/>
            <person name="Geller D.H."/>
            <person name="Auchus R.J."/>
        </authorList>
    </citation>
    <scope>VARIANTS AH5 HIS-347; GLN-358 AND CYS-417</scope>
</reference>
<reference key="27">
    <citation type="journal article" date="2002" name="J. Clin. Endocrinol. Metab.">
        <title>Combined 17alpha-hydroxylase/17,20-lyase deficiency caused by Phe93Cys mutation in the CYP17 gene.</title>
        <authorList>
            <person name="Di Cerbo A."/>
            <person name="Biason-Lauber A."/>
            <person name="Savino M."/>
            <person name="Piemontese M.R."/>
            <person name="Di Giorgio A."/>
            <person name="Perona M."/>
            <person name="Savoia A."/>
        </authorList>
    </citation>
    <scope>VARIANT AH5 CYS-93</scope>
</reference>
<reference key="28">
    <citation type="journal article" date="2002" name="J. Clin. Endocrinol. Metab.">
        <title>Differential inhibition of 17alpha-hydroxylase and 17,20-lyase activities by three novel missense CYP17 mutations identified in patients with P450c17 deficiency.</title>
        <authorList>
            <person name="Van Den Akker E.L.T."/>
            <person name="Koper J.W."/>
            <person name="Boehmer A.L.M."/>
            <person name="Themmen A.P.N."/>
            <person name="Verhoef-Post M."/>
            <person name="Timmerman M.A."/>
            <person name="Otten B.J."/>
            <person name="Drop S.L.S."/>
            <person name="De Jong F.H."/>
        </authorList>
    </citation>
    <scope>VARIANTS AH5 VAL-114; VAL-116; CYS-347 AND HIS-347</scope>
</reference>
<reference key="29">
    <citation type="journal article" date="2003" name="J. Clin. Endocrinol. Metab.">
        <title>P450c17 deficiency in Brazilian patients: biochemical diagnosis through progesterone levels confirmed by CYP17 genotyping.</title>
        <authorList>
            <person name="Martin R.M."/>
            <person name="Lin C.J."/>
            <person name="Costa E.M.F."/>
            <person name="de Oliveira M.L."/>
            <person name="Carrilho A."/>
            <person name="Villar H."/>
            <person name="Longui C.A."/>
            <person name="Mendonca B.B."/>
        </authorList>
    </citation>
    <scope>VARIANTS AH5 TRP-96; ASP-329; CYS-362; ARG-406 AND LEU-428</scope>
</reference>
<reference key="30">
    <citation type="journal article" date="2010" name="Metabolism">
        <title>Novel CYP17A1 mutation in a Japanese patient with combined 17alpha-hydroxylase/17,20-lyase deficiency.</title>
        <authorList>
            <person name="Katsumata N."/>
            <person name="Ogawa E."/>
            <person name="Fujiwara I."/>
            <person name="Fujikura K."/>
        </authorList>
    </citation>
    <scope>VARIANTS AH5 PHE-53 DEL AND ASN-373</scope>
</reference>
<reference key="31">
    <citation type="journal article" date="2014" name="Oman Med. J.">
        <title>Congenital adrenal hyperplasia due to 17-alpha-hydoxylase/17,20-lyase deficiency presenting with hypertension and pseudohermaphroditism: first case report from Oman.</title>
        <authorList>
            <person name="Mula-Abed W.A."/>
            <person name="Pambinezhuth F.B."/>
            <person name="Al-Kindi M.K."/>
            <person name="Al-Busaidi N.B."/>
            <person name="Al-Muslahi H.N."/>
            <person name="Al-Lamki M.A."/>
        </authorList>
    </citation>
    <scope>VARIANT AH5 GLN-96</scope>
</reference>
<reference key="32">
    <citation type="journal article" date="2014" name="Metabolism">
        <title>A review of the literature on common CYP17A1 mutations in adults with 17-hydroxylase/17,20-lyase deficiency, a case series of such mutations among Koreans and functional characteristics of a novel mutation.</title>
        <authorList>
            <person name="Kim Y.M."/>
            <person name="Kang M."/>
            <person name="Choi J.H."/>
            <person name="Lee B.H."/>
            <person name="Kim G.H."/>
            <person name="Ohn J.H."/>
            <person name="Kim S.Y."/>
            <person name="Park M.S."/>
            <person name="Yoo H.W."/>
        </authorList>
    </citation>
    <scope>VARIANTS AH5 GLU-174; LEU-373 AND LEU-406</scope>
    <scope>CHARACTERIZATION OF VARIANT AH5 LEU-406</scope>
</reference>
<reference key="33">
    <citation type="journal article" date="2015" name="Eur. J. Endocrinol.">
        <title>Partial deficiency of 17alpha-hydroxylase/17,20-lyase caused by a novel missense mutation in the canonical cytochrome heme-interacting motif.</title>
        <authorList>
            <person name="Rubtsov P."/>
            <person name="Nizhnik A."/>
            <person name="Dedov I.I."/>
            <person name="Kalinchenko N."/>
            <person name="Petrov V."/>
            <person name="Orekhova A."/>
            <person name="Spirin P."/>
            <person name="Prassolov V."/>
            <person name="Tiulpakov A."/>
        </authorList>
    </citation>
    <scope>VARIANT AH5 ARG-121</scope>
    <scope>CHARACTERIZATION OF VARIANT AH5 ARG-121</scope>
</reference>
<sequence length="508" mass="57371">MWELVALLLLTLAYLFWPKRRCPGAKYPKSLLSLPLVGSLPFLPRHGHMHNNFFKLQKKYGPIYSVRMGTKTTVIVGHHQLAKEVLIKKGKDFSGRPQMATLDIASNNRKGIAFADSGAHWQLHRRLAMATFALFKDGDQKLEKIICQEISTLCDMLATHNGQSIDISFPVFVAVTNVISLICFNTSYKNGDPELNVIQNYNEGIIDNLSKDSLVDLVPWLKIFPNKTLEKLKSHVKIRNDLLNKILENYKEKFRSDSITNMLDTLMQAKMNSDNGNAGPDQDSELLSDNHILTTIGDIFGAGVETTTSVVKWTLAFLLHNPQVKKKLYEEIDQNVGFSRTPTISDRNRLLLLEATIREVLRLRPVAPMLIPHKANVDSSIGEFAVDKGTEVIINLWALHHNEKEWHQPDQFMPERFLNPAGTQLISPSVSYLPFGAGPRSCIGEILARQELFLIMAWLLQRFDLEVPDDGQLPSLEGIPKVVFLIDSFKVKIKVRQAWREAQAEGST</sequence>
<name>CP17A_HUMAN</name>
<accession>P05093</accession>
<accession>Q5TZV7</accession>
<proteinExistence type="evidence at protein level"/>